<comment type="function">
    <text evidence="1">Catalyzes the reversible conversion of 2-phosphoglycerate (2-PG) into phosphoenolpyruvate (PEP). It is essential for the degradation of carbohydrates via glycolysis.</text>
</comment>
<comment type="catalytic activity">
    <reaction evidence="1">
        <text>(2R)-2-phosphoglycerate = phosphoenolpyruvate + H2O</text>
        <dbReference type="Rhea" id="RHEA:10164"/>
        <dbReference type="ChEBI" id="CHEBI:15377"/>
        <dbReference type="ChEBI" id="CHEBI:58289"/>
        <dbReference type="ChEBI" id="CHEBI:58702"/>
        <dbReference type="EC" id="4.2.1.11"/>
    </reaction>
</comment>
<comment type="cofactor">
    <cofactor evidence="1">
        <name>Mg(2+)</name>
        <dbReference type="ChEBI" id="CHEBI:18420"/>
    </cofactor>
    <text evidence="1">Binds a second Mg(2+) ion via substrate during catalysis.</text>
</comment>
<comment type="pathway">
    <text evidence="1">Carbohydrate degradation; glycolysis; pyruvate from D-glyceraldehyde 3-phosphate: step 4/5.</text>
</comment>
<comment type="subcellular location">
    <subcellularLocation>
        <location evidence="1">Cytoplasm</location>
    </subcellularLocation>
    <subcellularLocation>
        <location evidence="1">Secreted</location>
    </subcellularLocation>
    <subcellularLocation>
        <location evidence="1">Cell surface</location>
    </subcellularLocation>
    <text evidence="1">Fractions of enolase are present in both the cytoplasm and on the cell surface.</text>
</comment>
<comment type="similarity">
    <text evidence="1">Belongs to the enolase family.</text>
</comment>
<accession>Q74K78</accession>
<organism>
    <name type="scientific">Lactobacillus johnsonii (strain CNCM I-12250 / La1 / NCC 533)</name>
    <dbReference type="NCBI Taxonomy" id="257314"/>
    <lineage>
        <taxon>Bacteria</taxon>
        <taxon>Bacillati</taxon>
        <taxon>Bacillota</taxon>
        <taxon>Bacilli</taxon>
        <taxon>Lactobacillales</taxon>
        <taxon>Lactobacillaceae</taxon>
        <taxon>Lactobacillus</taxon>
    </lineage>
</organism>
<feature type="chain" id="PRO_0000133901" description="Enolase 1">
    <location>
        <begin position="1"/>
        <end position="432"/>
    </location>
</feature>
<feature type="active site" description="Proton donor" evidence="1">
    <location>
        <position position="205"/>
    </location>
</feature>
<feature type="active site" description="Proton acceptor" evidence="1">
    <location>
        <position position="339"/>
    </location>
</feature>
<feature type="binding site" evidence="1">
    <location>
        <position position="163"/>
    </location>
    <ligand>
        <name>(2R)-2-phosphoglycerate</name>
        <dbReference type="ChEBI" id="CHEBI:58289"/>
    </ligand>
</feature>
<feature type="binding site" evidence="1">
    <location>
        <position position="242"/>
    </location>
    <ligand>
        <name>Mg(2+)</name>
        <dbReference type="ChEBI" id="CHEBI:18420"/>
    </ligand>
</feature>
<feature type="binding site" evidence="1">
    <location>
        <position position="287"/>
    </location>
    <ligand>
        <name>Mg(2+)</name>
        <dbReference type="ChEBI" id="CHEBI:18420"/>
    </ligand>
</feature>
<feature type="binding site" evidence="1">
    <location>
        <position position="314"/>
    </location>
    <ligand>
        <name>Mg(2+)</name>
        <dbReference type="ChEBI" id="CHEBI:18420"/>
    </ligand>
</feature>
<feature type="binding site" evidence="1">
    <location>
        <position position="339"/>
    </location>
    <ligand>
        <name>(2R)-2-phosphoglycerate</name>
        <dbReference type="ChEBI" id="CHEBI:58289"/>
    </ligand>
</feature>
<feature type="binding site" evidence="1">
    <location>
        <position position="368"/>
    </location>
    <ligand>
        <name>(2R)-2-phosphoglycerate</name>
        <dbReference type="ChEBI" id="CHEBI:58289"/>
    </ligand>
</feature>
<feature type="binding site" evidence="1">
    <location>
        <position position="369"/>
    </location>
    <ligand>
        <name>(2R)-2-phosphoglycerate</name>
        <dbReference type="ChEBI" id="CHEBI:58289"/>
    </ligand>
</feature>
<feature type="binding site" evidence="1">
    <location>
        <position position="390"/>
    </location>
    <ligand>
        <name>(2R)-2-phosphoglycerate</name>
        <dbReference type="ChEBI" id="CHEBI:58289"/>
    </ligand>
</feature>
<proteinExistence type="inferred from homology"/>
<keyword id="KW-0963">Cytoplasm</keyword>
<keyword id="KW-0324">Glycolysis</keyword>
<keyword id="KW-0456">Lyase</keyword>
<keyword id="KW-0460">Magnesium</keyword>
<keyword id="KW-0479">Metal-binding</keyword>
<keyword id="KW-0964">Secreted</keyword>
<evidence type="ECO:0000255" key="1">
    <source>
        <dbReference type="HAMAP-Rule" id="MF_00318"/>
    </source>
</evidence>
<reference key="1">
    <citation type="journal article" date="2004" name="Proc. Natl. Acad. Sci. U.S.A.">
        <title>The genome sequence of the probiotic intestinal bacterium Lactobacillus johnsonii NCC 533.</title>
        <authorList>
            <person name="Pridmore R.D."/>
            <person name="Berger B."/>
            <person name="Desiere F."/>
            <person name="Vilanova D."/>
            <person name="Barretto C."/>
            <person name="Pittet A.-C."/>
            <person name="Zwahlen M.-C."/>
            <person name="Rouvet M."/>
            <person name="Altermann E."/>
            <person name="Barrangou R."/>
            <person name="Mollet B."/>
            <person name="Mercenier A."/>
            <person name="Klaenhammer T."/>
            <person name="Arigoni F."/>
            <person name="Schell M.A."/>
        </authorList>
    </citation>
    <scope>NUCLEOTIDE SEQUENCE [LARGE SCALE GENOMIC DNA]</scope>
    <source>
        <strain>CNCM I-1225 / La1 / NCC 533</strain>
    </source>
</reference>
<gene>
    <name evidence="1" type="primary">eno1</name>
    <name type="ordered locus">LJ_0875</name>
</gene>
<dbReference type="EC" id="4.2.1.11" evidence="1"/>
<dbReference type="EMBL" id="AE017198">
    <property type="protein sequence ID" value="AAS08696.1"/>
    <property type="molecule type" value="Genomic_DNA"/>
</dbReference>
<dbReference type="SMR" id="Q74K78"/>
<dbReference type="MoonProt" id="Q74K78"/>
<dbReference type="KEGG" id="ljo:LJ_0875"/>
<dbReference type="eggNOG" id="COG0148">
    <property type="taxonomic scope" value="Bacteria"/>
</dbReference>
<dbReference type="HOGENOM" id="CLU_031223_2_1_9"/>
<dbReference type="UniPathway" id="UPA00109">
    <property type="reaction ID" value="UER00187"/>
</dbReference>
<dbReference type="Proteomes" id="UP000000581">
    <property type="component" value="Chromosome"/>
</dbReference>
<dbReference type="GO" id="GO:0009986">
    <property type="term" value="C:cell surface"/>
    <property type="evidence" value="ECO:0007669"/>
    <property type="project" value="UniProtKB-SubCell"/>
</dbReference>
<dbReference type="GO" id="GO:0005576">
    <property type="term" value="C:extracellular region"/>
    <property type="evidence" value="ECO:0007669"/>
    <property type="project" value="UniProtKB-SubCell"/>
</dbReference>
<dbReference type="GO" id="GO:0000015">
    <property type="term" value="C:phosphopyruvate hydratase complex"/>
    <property type="evidence" value="ECO:0007669"/>
    <property type="project" value="InterPro"/>
</dbReference>
<dbReference type="GO" id="GO:0043236">
    <property type="term" value="F:laminin binding"/>
    <property type="evidence" value="ECO:0000314"/>
    <property type="project" value="CAFA"/>
</dbReference>
<dbReference type="GO" id="GO:0000287">
    <property type="term" value="F:magnesium ion binding"/>
    <property type="evidence" value="ECO:0007669"/>
    <property type="project" value="UniProtKB-UniRule"/>
</dbReference>
<dbReference type="GO" id="GO:0004634">
    <property type="term" value="F:phosphopyruvate hydratase activity"/>
    <property type="evidence" value="ECO:0007669"/>
    <property type="project" value="UniProtKB-UniRule"/>
</dbReference>
<dbReference type="GO" id="GO:0006096">
    <property type="term" value="P:glycolytic process"/>
    <property type="evidence" value="ECO:0007669"/>
    <property type="project" value="UniProtKB-UniRule"/>
</dbReference>
<dbReference type="CDD" id="cd03313">
    <property type="entry name" value="enolase"/>
    <property type="match status" value="1"/>
</dbReference>
<dbReference type="FunFam" id="3.20.20.120:FF:000001">
    <property type="entry name" value="Enolase"/>
    <property type="match status" value="1"/>
</dbReference>
<dbReference type="FunFam" id="3.30.390.10:FF:000001">
    <property type="entry name" value="Enolase"/>
    <property type="match status" value="1"/>
</dbReference>
<dbReference type="Gene3D" id="3.20.20.120">
    <property type="entry name" value="Enolase-like C-terminal domain"/>
    <property type="match status" value="1"/>
</dbReference>
<dbReference type="Gene3D" id="3.30.390.10">
    <property type="entry name" value="Enolase-like, N-terminal domain"/>
    <property type="match status" value="1"/>
</dbReference>
<dbReference type="HAMAP" id="MF_00318">
    <property type="entry name" value="Enolase"/>
    <property type="match status" value="1"/>
</dbReference>
<dbReference type="InterPro" id="IPR000941">
    <property type="entry name" value="Enolase"/>
</dbReference>
<dbReference type="InterPro" id="IPR036849">
    <property type="entry name" value="Enolase-like_C_sf"/>
</dbReference>
<dbReference type="InterPro" id="IPR029017">
    <property type="entry name" value="Enolase-like_N"/>
</dbReference>
<dbReference type="InterPro" id="IPR020810">
    <property type="entry name" value="Enolase_C"/>
</dbReference>
<dbReference type="InterPro" id="IPR020809">
    <property type="entry name" value="Enolase_CS"/>
</dbReference>
<dbReference type="InterPro" id="IPR020811">
    <property type="entry name" value="Enolase_N"/>
</dbReference>
<dbReference type="NCBIfam" id="TIGR01060">
    <property type="entry name" value="eno"/>
    <property type="match status" value="1"/>
</dbReference>
<dbReference type="PANTHER" id="PTHR11902">
    <property type="entry name" value="ENOLASE"/>
    <property type="match status" value="1"/>
</dbReference>
<dbReference type="PANTHER" id="PTHR11902:SF1">
    <property type="entry name" value="ENOLASE"/>
    <property type="match status" value="1"/>
</dbReference>
<dbReference type="Pfam" id="PF00113">
    <property type="entry name" value="Enolase_C"/>
    <property type="match status" value="1"/>
</dbReference>
<dbReference type="Pfam" id="PF03952">
    <property type="entry name" value="Enolase_N"/>
    <property type="match status" value="1"/>
</dbReference>
<dbReference type="PIRSF" id="PIRSF001400">
    <property type="entry name" value="Enolase"/>
    <property type="match status" value="1"/>
</dbReference>
<dbReference type="PRINTS" id="PR00148">
    <property type="entry name" value="ENOLASE"/>
</dbReference>
<dbReference type="SFLD" id="SFLDF00002">
    <property type="entry name" value="enolase"/>
    <property type="match status" value="1"/>
</dbReference>
<dbReference type="SFLD" id="SFLDG00178">
    <property type="entry name" value="enolase"/>
    <property type="match status" value="1"/>
</dbReference>
<dbReference type="SMART" id="SM01192">
    <property type="entry name" value="Enolase_C"/>
    <property type="match status" value="1"/>
</dbReference>
<dbReference type="SMART" id="SM01193">
    <property type="entry name" value="Enolase_N"/>
    <property type="match status" value="1"/>
</dbReference>
<dbReference type="SUPFAM" id="SSF51604">
    <property type="entry name" value="Enolase C-terminal domain-like"/>
    <property type="match status" value="1"/>
</dbReference>
<dbReference type="SUPFAM" id="SSF54826">
    <property type="entry name" value="Enolase N-terminal domain-like"/>
    <property type="match status" value="1"/>
</dbReference>
<dbReference type="PROSITE" id="PS00164">
    <property type="entry name" value="ENOLASE"/>
    <property type="match status" value="1"/>
</dbReference>
<protein>
    <recommendedName>
        <fullName evidence="1">Enolase 1</fullName>
        <ecNumber evidence="1">4.2.1.11</ecNumber>
    </recommendedName>
    <alternativeName>
        <fullName evidence="1">2-phospho-D-glycerate hydro-lyase 1</fullName>
    </alternativeName>
    <alternativeName>
        <fullName evidence="1">2-phosphoglycerate dehydratase 1</fullName>
    </alternativeName>
</protein>
<name>ENO1_LACJO</name>
<sequence>MSVITDIHAREVLDSRGNPTVEAEVYTELGGFGRAIVPSGASTGEHEAVELRDGDKSRFLGQGVLTAVENVNGEIAKAVIGLDVTDQRLIDQTMIDLDGTPNKGRLGANAMLAVSLASARAAADELGLPLYEYLGGPNAHVLPTPMMNVINGGKHADNNVDIQEFMIMPVGAKSLHEAVRMGAETFHTLKSLLQERGESTAVGDEGGFAPNLKNNEEPFEILVEAIQRAGYKPGQDISIAFDCAASEFYNKDTKKYVTVADGREYTAEEWTSLMEDIVDKYPVISIEDPLDENDWEGWKVFTERLGDKVQIVGDDLFVTNTNYLEKGIKMGVANSILIKLNQIGTLTETFEAIEMAKEAGYTAVVSHRSGETEDTTIADLVVATNAGQIKTGSMSRTDRIAKYNQLMRIEEALGSTAQYKGIHSFYNLHKQF</sequence>